<keyword id="KW-1185">Reference proteome</keyword>
<keyword id="KW-0687">Ribonucleoprotein</keyword>
<keyword id="KW-0689">Ribosomal protein</keyword>
<name>RS2_PARD8</name>
<sequence length="278" mass="31035">MSRVNFDQLLEAGVHFGHLKRKWNPAMAPYIFMERNGIHIIDLYKTVAKVDEAAEVMKNLAKQGKKVLFVATKKQAKQVVADKAASVGMPYVIERWPGGMLTNFPTIRKAIKKMATIDKMTKDGTFDNLSKREKLQITRQRAKLEKTLGSIVDLTRLPSALFVVDVMKEHIAVREANRLGIPVFGMVDTNSNPNNIDYVIPANDDATKSVEVILGAICEAMNEGLQERKAEKIDAEAAEEAPKRERKAKAAVKKERTKKEDDDALNANVAGKFAKDEE</sequence>
<organism>
    <name type="scientific">Parabacteroides distasonis (strain ATCC 8503 / DSM 20701 / CIP 104284 / JCM 5825 / NCTC 11152)</name>
    <dbReference type="NCBI Taxonomy" id="435591"/>
    <lineage>
        <taxon>Bacteria</taxon>
        <taxon>Pseudomonadati</taxon>
        <taxon>Bacteroidota</taxon>
        <taxon>Bacteroidia</taxon>
        <taxon>Bacteroidales</taxon>
        <taxon>Tannerellaceae</taxon>
        <taxon>Parabacteroides</taxon>
    </lineage>
</organism>
<proteinExistence type="inferred from homology"/>
<accession>A6LHM7</accession>
<gene>
    <name evidence="1" type="primary">rpsB</name>
    <name type="ordered locus">BDI_3489</name>
</gene>
<evidence type="ECO:0000255" key="1">
    <source>
        <dbReference type="HAMAP-Rule" id="MF_00291"/>
    </source>
</evidence>
<evidence type="ECO:0000256" key="2">
    <source>
        <dbReference type="SAM" id="MobiDB-lite"/>
    </source>
</evidence>
<evidence type="ECO:0000305" key="3"/>
<protein>
    <recommendedName>
        <fullName evidence="1">Small ribosomal subunit protein uS2</fullName>
    </recommendedName>
    <alternativeName>
        <fullName evidence="3">30S ribosomal protein S2</fullName>
    </alternativeName>
</protein>
<reference key="1">
    <citation type="journal article" date="2007" name="PLoS Biol.">
        <title>Evolution of symbiotic bacteria in the distal human intestine.</title>
        <authorList>
            <person name="Xu J."/>
            <person name="Mahowald M.A."/>
            <person name="Ley R.E."/>
            <person name="Lozupone C.A."/>
            <person name="Hamady M."/>
            <person name="Martens E.C."/>
            <person name="Henrissat B."/>
            <person name="Coutinho P.M."/>
            <person name="Minx P."/>
            <person name="Latreille P."/>
            <person name="Cordum H."/>
            <person name="Van Brunt A."/>
            <person name="Kim K."/>
            <person name="Fulton R.S."/>
            <person name="Fulton L.A."/>
            <person name="Clifton S.W."/>
            <person name="Wilson R.K."/>
            <person name="Knight R.D."/>
            <person name="Gordon J.I."/>
        </authorList>
    </citation>
    <scope>NUCLEOTIDE SEQUENCE [LARGE SCALE GENOMIC DNA]</scope>
    <source>
        <strain>ATCC 8503 / DSM 20701 / CIP 104284 / JCM 5825 / NCTC 11152</strain>
    </source>
</reference>
<comment type="similarity">
    <text evidence="1">Belongs to the universal ribosomal protein uS2 family.</text>
</comment>
<feature type="chain" id="PRO_1000004015" description="Small ribosomal subunit protein uS2">
    <location>
        <begin position="1"/>
        <end position="278"/>
    </location>
</feature>
<feature type="region of interest" description="Disordered" evidence="2">
    <location>
        <begin position="235"/>
        <end position="278"/>
    </location>
</feature>
<feature type="compositionally biased region" description="Basic and acidic residues" evidence="2">
    <location>
        <begin position="252"/>
        <end position="261"/>
    </location>
</feature>
<dbReference type="EMBL" id="CP000140">
    <property type="protein sequence ID" value="ABR45191.1"/>
    <property type="molecule type" value="Genomic_DNA"/>
</dbReference>
<dbReference type="RefSeq" id="WP_005859482.1">
    <property type="nucleotide sequence ID" value="NZ_LR215978.1"/>
</dbReference>
<dbReference type="SMR" id="A6LHM7"/>
<dbReference type="STRING" id="435591.BDI_3489"/>
<dbReference type="PaxDb" id="435591-BDI_3489"/>
<dbReference type="GeneID" id="93523549"/>
<dbReference type="KEGG" id="pdi:BDI_3489"/>
<dbReference type="eggNOG" id="COG0052">
    <property type="taxonomic scope" value="Bacteria"/>
</dbReference>
<dbReference type="HOGENOM" id="CLU_040318_0_2_10"/>
<dbReference type="BioCyc" id="PDIS435591:G1G5A-3579-MONOMER"/>
<dbReference type="Proteomes" id="UP000000566">
    <property type="component" value="Chromosome"/>
</dbReference>
<dbReference type="GO" id="GO:0022627">
    <property type="term" value="C:cytosolic small ribosomal subunit"/>
    <property type="evidence" value="ECO:0007669"/>
    <property type="project" value="TreeGrafter"/>
</dbReference>
<dbReference type="GO" id="GO:0003735">
    <property type="term" value="F:structural constituent of ribosome"/>
    <property type="evidence" value="ECO:0007669"/>
    <property type="project" value="InterPro"/>
</dbReference>
<dbReference type="GO" id="GO:0006412">
    <property type="term" value="P:translation"/>
    <property type="evidence" value="ECO:0007669"/>
    <property type="project" value="UniProtKB-UniRule"/>
</dbReference>
<dbReference type="CDD" id="cd01425">
    <property type="entry name" value="RPS2"/>
    <property type="match status" value="1"/>
</dbReference>
<dbReference type="FunFam" id="1.10.287.610:FF:000001">
    <property type="entry name" value="30S ribosomal protein S2"/>
    <property type="match status" value="1"/>
</dbReference>
<dbReference type="Gene3D" id="3.40.50.10490">
    <property type="entry name" value="Glucose-6-phosphate isomerase like protein, domain 1"/>
    <property type="match status" value="1"/>
</dbReference>
<dbReference type="Gene3D" id="1.10.287.610">
    <property type="entry name" value="Helix hairpin bin"/>
    <property type="match status" value="1"/>
</dbReference>
<dbReference type="HAMAP" id="MF_00291_B">
    <property type="entry name" value="Ribosomal_uS2_B"/>
    <property type="match status" value="1"/>
</dbReference>
<dbReference type="InterPro" id="IPR001865">
    <property type="entry name" value="Ribosomal_uS2"/>
</dbReference>
<dbReference type="InterPro" id="IPR005706">
    <property type="entry name" value="Ribosomal_uS2_bac/mit/plastid"/>
</dbReference>
<dbReference type="InterPro" id="IPR018130">
    <property type="entry name" value="Ribosomal_uS2_CS"/>
</dbReference>
<dbReference type="InterPro" id="IPR023591">
    <property type="entry name" value="Ribosomal_uS2_flav_dom_sf"/>
</dbReference>
<dbReference type="NCBIfam" id="TIGR01011">
    <property type="entry name" value="rpsB_bact"/>
    <property type="match status" value="1"/>
</dbReference>
<dbReference type="PANTHER" id="PTHR12534">
    <property type="entry name" value="30S RIBOSOMAL PROTEIN S2 PROKARYOTIC AND ORGANELLAR"/>
    <property type="match status" value="1"/>
</dbReference>
<dbReference type="PANTHER" id="PTHR12534:SF0">
    <property type="entry name" value="SMALL RIBOSOMAL SUBUNIT PROTEIN US2M"/>
    <property type="match status" value="1"/>
</dbReference>
<dbReference type="Pfam" id="PF00318">
    <property type="entry name" value="Ribosomal_S2"/>
    <property type="match status" value="1"/>
</dbReference>
<dbReference type="PRINTS" id="PR00395">
    <property type="entry name" value="RIBOSOMALS2"/>
</dbReference>
<dbReference type="SUPFAM" id="SSF52313">
    <property type="entry name" value="Ribosomal protein S2"/>
    <property type="match status" value="1"/>
</dbReference>
<dbReference type="PROSITE" id="PS00962">
    <property type="entry name" value="RIBOSOMAL_S2_1"/>
    <property type="match status" value="1"/>
</dbReference>
<dbReference type="PROSITE" id="PS00963">
    <property type="entry name" value="RIBOSOMAL_S2_2"/>
    <property type="match status" value="1"/>
</dbReference>